<name>NTPPA_CUPMC</name>
<reference key="1">
    <citation type="journal article" date="2010" name="PLoS ONE">
        <title>The complete genome sequence of Cupriavidus metallidurans strain CH34, a master survivalist in harsh and anthropogenic environments.</title>
        <authorList>
            <person name="Janssen P.J."/>
            <person name="Van Houdt R."/>
            <person name="Moors H."/>
            <person name="Monsieurs P."/>
            <person name="Morin N."/>
            <person name="Michaux A."/>
            <person name="Benotmane M.A."/>
            <person name="Leys N."/>
            <person name="Vallaeys T."/>
            <person name="Lapidus A."/>
            <person name="Monchy S."/>
            <person name="Medigue C."/>
            <person name="Taghavi S."/>
            <person name="McCorkle S."/>
            <person name="Dunn J."/>
            <person name="van der Lelie D."/>
            <person name="Mergeay M."/>
        </authorList>
    </citation>
    <scope>NUCLEOTIDE SEQUENCE [LARGE SCALE GENOMIC DNA]</scope>
    <source>
        <strain>ATCC 43123 / DSM 2839 / NBRC 102507 / CH34</strain>
    </source>
</reference>
<gene>
    <name type="ordered locus">Rmet_0779</name>
</gene>
<accession>Q1LQB1</accession>
<feature type="chain" id="PRO_0000267389" description="dTTP/UTP pyrophosphatase">
    <location>
        <begin position="1"/>
        <end position="200"/>
    </location>
</feature>
<feature type="active site" description="Proton acceptor" evidence="1">
    <location>
        <position position="81"/>
    </location>
</feature>
<feature type="site" description="Important for substrate specificity" evidence="1">
    <location>
        <position position="13"/>
    </location>
</feature>
<feature type="site" description="Important for substrate specificity" evidence="1">
    <location>
        <position position="82"/>
    </location>
</feature>
<feature type="site" description="Important for substrate specificity" evidence="1">
    <location>
        <position position="164"/>
    </location>
</feature>
<sequence>MTSILYLASQSPRRRELLTQLGVTYELLLADAGEDAEALEAVRPGESPDDYVQRVCALKADAALQRRARRGLPDAPILTSDTTVCRGGDILGKPADARDAAAMLASLSGTTHRVLTAVTVATSAGQRHALSISHVTFRPILAPEIERYVASGEPLGKAGAYGIQGRAAEFVERIDGSYSGIMGLPLFETAALLREAGLHF</sequence>
<keyword id="KW-0963">Cytoplasm</keyword>
<keyword id="KW-0378">Hydrolase</keyword>
<keyword id="KW-0546">Nucleotide metabolism</keyword>
<keyword id="KW-1185">Reference proteome</keyword>
<organism>
    <name type="scientific">Cupriavidus metallidurans (strain ATCC 43123 / DSM 2839 / NBRC 102507 / CH34)</name>
    <name type="common">Ralstonia metallidurans</name>
    <dbReference type="NCBI Taxonomy" id="266264"/>
    <lineage>
        <taxon>Bacteria</taxon>
        <taxon>Pseudomonadati</taxon>
        <taxon>Pseudomonadota</taxon>
        <taxon>Betaproteobacteria</taxon>
        <taxon>Burkholderiales</taxon>
        <taxon>Burkholderiaceae</taxon>
        <taxon>Cupriavidus</taxon>
    </lineage>
</organism>
<evidence type="ECO:0000255" key="1">
    <source>
        <dbReference type="HAMAP-Rule" id="MF_00528"/>
    </source>
</evidence>
<dbReference type="EC" id="3.6.1.9" evidence="1"/>
<dbReference type="EMBL" id="CP000352">
    <property type="protein sequence ID" value="ABF07665.1"/>
    <property type="molecule type" value="Genomic_DNA"/>
</dbReference>
<dbReference type="RefSeq" id="WP_011515619.1">
    <property type="nucleotide sequence ID" value="NC_007973.1"/>
</dbReference>
<dbReference type="SMR" id="Q1LQB1"/>
<dbReference type="STRING" id="266264.Rmet_0779"/>
<dbReference type="KEGG" id="rme:Rmet_0779"/>
<dbReference type="eggNOG" id="COG0424">
    <property type="taxonomic scope" value="Bacteria"/>
</dbReference>
<dbReference type="HOGENOM" id="CLU_040416_2_1_4"/>
<dbReference type="Proteomes" id="UP000002429">
    <property type="component" value="Chromosome"/>
</dbReference>
<dbReference type="GO" id="GO:0005737">
    <property type="term" value="C:cytoplasm"/>
    <property type="evidence" value="ECO:0007669"/>
    <property type="project" value="UniProtKB-SubCell"/>
</dbReference>
<dbReference type="GO" id="GO:0036218">
    <property type="term" value="F:dTTP diphosphatase activity"/>
    <property type="evidence" value="ECO:0007669"/>
    <property type="project" value="RHEA"/>
</dbReference>
<dbReference type="GO" id="GO:0036221">
    <property type="term" value="F:UTP diphosphatase activity"/>
    <property type="evidence" value="ECO:0007669"/>
    <property type="project" value="RHEA"/>
</dbReference>
<dbReference type="GO" id="GO:0009117">
    <property type="term" value="P:nucleotide metabolic process"/>
    <property type="evidence" value="ECO:0007669"/>
    <property type="project" value="UniProtKB-KW"/>
</dbReference>
<dbReference type="CDD" id="cd00555">
    <property type="entry name" value="Maf"/>
    <property type="match status" value="1"/>
</dbReference>
<dbReference type="Gene3D" id="3.90.950.10">
    <property type="match status" value="1"/>
</dbReference>
<dbReference type="HAMAP" id="MF_00528">
    <property type="entry name" value="Maf"/>
    <property type="match status" value="1"/>
</dbReference>
<dbReference type="InterPro" id="IPR029001">
    <property type="entry name" value="ITPase-like_fam"/>
</dbReference>
<dbReference type="InterPro" id="IPR003697">
    <property type="entry name" value="Maf-like"/>
</dbReference>
<dbReference type="NCBIfam" id="TIGR00172">
    <property type="entry name" value="maf"/>
    <property type="match status" value="1"/>
</dbReference>
<dbReference type="PANTHER" id="PTHR43213">
    <property type="entry name" value="BIFUNCTIONAL DTTP/UTP PYROPHOSPHATASE/METHYLTRANSFERASE PROTEIN-RELATED"/>
    <property type="match status" value="1"/>
</dbReference>
<dbReference type="PANTHER" id="PTHR43213:SF5">
    <property type="entry name" value="BIFUNCTIONAL DTTP_UTP PYROPHOSPHATASE_METHYLTRANSFERASE PROTEIN-RELATED"/>
    <property type="match status" value="1"/>
</dbReference>
<dbReference type="Pfam" id="PF02545">
    <property type="entry name" value="Maf"/>
    <property type="match status" value="1"/>
</dbReference>
<dbReference type="PIRSF" id="PIRSF006305">
    <property type="entry name" value="Maf"/>
    <property type="match status" value="1"/>
</dbReference>
<dbReference type="SUPFAM" id="SSF52972">
    <property type="entry name" value="ITPase-like"/>
    <property type="match status" value="1"/>
</dbReference>
<protein>
    <recommendedName>
        <fullName evidence="1">dTTP/UTP pyrophosphatase</fullName>
        <shortName evidence="1">dTTPase/UTPase</shortName>
        <ecNumber evidence="1">3.6.1.9</ecNumber>
    </recommendedName>
    <alternativeName>
        <fullName evidence="1">Nucleoside triphosphate pyrophosphatase</fullName>
    </alternativeName>
    <alternativeName>
        <fullName evidence="1">Nucleotide pyrophosphatase</fullName>
        <shortName evidence="1">Nucleotide PPase</shortName>
    </alternativeName>
</protein>
<proteinExistence type="inferred from homology"/>
<comment type="function">
    <text evidence="1">Nucleoside triphosphate pyrophosphatase that hydrolyzes dTTP and UTP. May have a dual role in cell division arrest and in preventing the incorporation of modified nucleotides into cellular nucleic acids.</text>
</comment>
<comment type="catalytic activity">
    <reaction evidence="1">
        <text>dTTP + H2O = dTMP + diphosphate + H(+)</text>
        <dbReference type="Rhea" id="RHEA:28534"/>
        <dbReference type="ChEBI" id="CHEBI:15377"/>
        <dbReference type="ChEBI" id="CHEBI:15378"/>
        <dbReference type="ChEBI" id="CHEBI:33019"/>
        <dbReference type="ChEBI" id="CHEBI:37568"/>
        <dbReference type="ChEBI" id="CHEBI:63528"/>
        <dbReference type="EC" id="3.6.1.9"/>
    </reaction>
</comment>
<comment type="catalytic activity">
    <reaction evidence="1">
        <text>UTP + H2O = UMP + diphosphate + H(+)</text>
        <dbReference type="Rhea" id="RHEA:29395"/>
        <dbReference type="ChEBI" id="CHEBI:15377"/>
        <dbReference type="ChEBI" id="CHEBI:15378"/>
        <dbReference type="ChEBI" id="CHEBI:33019"/>
        <dbReference type="ChEBI" id="CHEBI:46398"/>
        <dbReference type="ChEBI" id="CHEBI:57865"/>
        <dbReference type="EC" id="3.6.1.9"/>
    </reaction>
</comment>
<comment type="cofactor">
    <cofactor evidence="1">
        <name>a divalent metal cation</name>
        <dbReference type="ChEBI" id="CHEBI:60240"/>
    </cofactor>
</comment>
<comment type="subcellular location">
    <subcellularLocation>
        <location evidence="1">Cytoplasm</location>
    </subcellularLocation>
</comment>
<comment type="similarity">
    <text evidence="1">Belongs to the Maf family. YhdE subfamily.</text>
</comment>